<gene>
    <name evidence="1" type="primary">mshD</name>
    <name type="ordered locus">Strop_0291</name>
</gene>
<dbReference type="EC" id="2.3.1.189" evidence="1"/>
<dbReference type="EMBL" id="CP000667">
    <property type="protein sequence ID" value="ABP52776.1"/>
    <property type="molecule type" value="Genomic_DNA"/>
</dbReference>
<dbReference type="RefSeq" id="WP_011904211.1">
    <property type="nucleotide sequence ID" value="NC_009380.1"/>
</dbReference>
<dbReference type="SMR" id="A4X1M6"/>
<dbReference type="STRING" id="369723.Strop_0291"/>
<dbReference type="KEGG" id="stp:Strop_0291"/>
<dbReference type="PATRIC" id="fig|369723.5.peg.301"/>
<dbReference type="eggNOG" id="COG0456">
    <property type="taxonomic scope" value="Bacteria"/>
</dbReference>
<dbReference type="HOGENOM" id="CLU_068014_0_0_11"/>
<dbReference type="Proteomes" id="UP000000235">
    <property type="component" value="Chromosome"/>
</dbReference>
<dbReference type="GO" id="GO:0035447">
    <property type="term" value="F:mycothiol synthase activity"/>
    <property type="evidence" value="ECO:0007669"/>
    <property type="project" value="UniProtKB-UniRule"/>
</dbReference>
<dbReference type="GO" id="GO:0008999">
    <property type="term" value="F:protein-N-terminal-alanine acetyltransferase activity"/>
    <property type="evidence" value="ECO:0007669"/>
    <property type="project" value="TreeGrafter"/>
</dbReference>
<dbReference type="GO" id="GO:0010125">
    <property type="term" value="P:mycothiol biosynthetic process"/>
    <property type="evidence" value="ECO:0007669"/>
    <property type="project" value="UniProtKB-UniRule"/>
</dbReference>
<dbReference type="CDD" id="cd04301">
    <property type="entry name" value="NAT_SF"/>
    <property type="match status" value="2"/>
</dbReference>
<dbReference type="Gene3D" id="3.40.630.30">
    <property type="match status" value="1"/>
</dbReference>
<dbReference type="HAMAP" id="MF_01698">
    <property type="entry name" value="MshD"/>
    <property type="match status" value="1"/>
</dbReference>
<dbReference type="InterPro" id="IPR016181">
    <property type="entry name" value="Acyl_CoA_acyltransferase"/>
</dbReference>
<dbReference type="InterPro" id="IPR000182">
    <property type="entry name" value="GNAT_dom"/>
</dbReference>
<dbReference type="InterPro" id="IPR050276">
    <property type="entry name" value="MshD_Acetyltransferase"/>
</dbReference>
<dbReference type="InterPro" id="IPR017813">
    <property type="entry name" value="Mycothiol_AcTrfase"/>
</dbReference>
<dbReference type="NCBIfam" id="TIGR03448">
    <property type="entry name" value="mycothiol_MshD"/>
    <property type="match status" value="1"/>
</dbReference>
<dbReference type="PANTHER" id="PTHR43617">
    <property type="entry name" value="L-AMINO ACID N-ACETYLTRANSFERASE"/>
    <property type="match status" value="1"/>
</dbReference>
<dbReference type="PANTHER" id="PTHR43617:SF31">
    <property type="entry name" value="MYCOTHIOL ACETYLTRANSFERASE"/>
    <property type="match status" value="1"/>
</dbReference>
<dbReference type="Pfam" id="PF00583">
    <property type="entry name" value="Acetyltransf_1"/>
    <property type="match status" value="2"/>
</dbReference>
<dbReference type="PIRSF" id="PIRSF021524">
    <property type="entry name" value="MSH_acetyltransferase"/>
    <property type="match status" value="1"/>
</dbReference>
<dbReference type="SUPFAM" id="SSF55729">
    <property type="entry name" value="Acyl-CoA N-acyltransferases (Nat)"/>
    <property type="match status" value="1"/>
</dbReference>
<dbReference type="PROSITE" id="PS51186">
    <property type="entry name" value="GNAT"/>
    <property type="match status" value="2"/>
</dbReference>
<reference key="1">
    <citation type="journal article" date="2007" name="Proc. Natl. Acad. Sci. U.S.A.">
        <title>Genome sequencing reveals complex secondary metabolome in the marine actinomycete Salinispora tropica.</title>
        <authorList>
            <person name="Udwary D.W."/>
            <person name="Zeigler L."/>
            <person name="Asolkar R.N."/>
            <person name="Singan V."/>
            <person name="Lapidus A."/>
            <person name="Fenical W."/>
            <person name="Jensen P.R."/>
            <person name="Moore B.S."/>
        </authorList>
    </citation>
    <scope>NUCLEOTIDE SEQUENCE [LARGE SCALE GENOMIC DNA]</scope>
    <source>
        <strain>ATCC BAA-916 / DSM 44818 / JCM 13857 / NBRC 105044 / CNB-440</strain>
    </source>
</reference>
<keyword id="KW-0012">Acyltransferase</keyword>
<keyword id="KW-1185">Reference proteome</keyword>
<keyword id="KW-0677">Repeat</keyword>
<keyword id="KW-0808">Transferase</keyword>
<feature type="chain" id="PRO_0000400297" description="Mycothiol acetyltransferase">
    <location>
        <begin position="1"/>
        <end position="307"/>
    </location>
</feature>
<feature type="domain" description="N-acetyltransferase 1" evidence="1">
    <location>
        <begin position="12"/>
        <end position="157"/>
    </location>
</feature>
<feature type="domain" description="N-acetyltransferase 2" evidence="1">
    <location>
        <begin position="160"/>
        <end position="307"/>
    </location>
</feature>
<feature type="binding site" evidence="1">
    <location>
        <position position="43"/>
    </location>
    <ligand>
        <name>1D-myo-inositol 2-(L-cysteinylamino)-2-deoxy-alpha-D-glucopyranoside</name>
        <dbReference type="ChEBI" id="CHEBI:58887"/>
    </ligand>
</feature>
<feature type="binding site" evidence="1">
    <location>
        <begin position="87"/>
        <end position="89"/>
    </location>
    <ligand>
        <name>acetyl-CoA</name>
        <dbReference type="ChEBI" id="CHEBI:57288"/>
        <label>1</label>
    </ligand>
</feature>
<feature type="binding site" evidence="1">
    <location>
        <position position="187"/>
    </location>
    <ligand>
        <name>1D-myo-inositol 2-(L-cysteinylamino)-2-deoxy-alpha-D-glucopyranoside</name>
        <dbReference type="ChEBI" id="CHEBI:58887"/>
    </ligand>
</feature>
<feature type="binding site" evidence="1">
    <location>
        <position position="227"/>
    </location>
    <ligand>
        <name>1D-myo-inositol 2-(L-cysteinylamino)-2-deoxy-alpha-D-glucopyranoside</name>
        <dbReference type="ChEBI" id="CHEBI:58887"/>
    </ligand>
</feature>
<feature type="binding site" evidence="1">
    <location>
        <position position="239"/>
    </location>
    <ligand>
        <name>1D-myo-inositol 2-(L-cysteinylamino)-2-deoxy-alpha-D-glucopyranoside</name>
        <dbReference type="ChEBI" id="CHEBI:58887"/>
    </ligand>
</feature>
<feature type="binding site" evidence="1">
    <location>
        <begin position="243"/>
        <end position="245"/>
    </location>
    <ligand>
        <name>acetyl-CoA</name>
        <dbReference type="ChEBI" id="CHEBI:57288"/>
        <label>2</label>
    </ligand>
</feature>
<feature type="binding site" evidence="1">
    <location>
        <begin position="250"/>
        <end position="256"/>
    </location>
    <ligand>
        <name>acetyl-CoA</name>
        <dbReference type="ChEBI" id="CHEBI:57288"/>
        <label>2</label>
    </ligand>
</feature>
<feature type="binding site" evidence="1">
    <location>
        <position position="278"/>
    </location>
    <ligand>
        <name>1D-myo-inositol 2-(L-cysteinylamino)-2-deoxy-alpha-D-glucopyranoside</name>
        <dbReference type="ChEBI" id="CHEBI:58887"/>
    </ligand>
</feature>
<accession>A4X1M6</accession>
<comment type="function">
    <text evidence="1">Catalyzes the transfer of acetyl from acetyl-CoA to desacetylmycothiol (Cys-GlcN-Ins) to form mycothiol.</text>
</comment>
<comment type="catalytic activity">
    <reaction evidence="1">
        <text>1D-myo-inositol 2-(L-cysteinylamino)-2-deoxy-alpha-D-glucopyranoside + acetyl-CoA = mycothiol + CoA + H(+)</text>
        <dbReference type="Rhea" id="RHEA:26172"/>
        <dbReference type="ChEBI" id="CHEBI:15378"/>
        <dbReference type="ChEBI" id="CHEBI:16768"/>
        <dbReference type="ChEBI" id="CHEBI:57287"/>
        <dbReference type="ChEBI" id="CHEBI:57288"/>
        <dbReference type="ChEBI" id="CHEBI:58887"/>
        <dbReference type="EC" id="2.3.1.189"/>
    </reaction>
</comment>
<comment type="subunit">
    <text evidence="1">Monomer.</text>
</comment>
<comment type="similarity">
    <text evidence="1">Belongs to the acetyltransferase family. MshD subfamily.</text>
</comment>
<organism>
    <name type="scientific">Salinispora tropica (strain ATCC BAA-916 / DSM 44818 / JCM 13857 / NBRC 105044 / CNB-440)</name>
    <dbReference type="NCBI Taxonomy" id="369723"/>
    <lineage>
        <taxon>Bacteria</taxon>
        <taxon>Bacillati</taxon>
        <taxon>Actinomycetota</taxon>
        <taxon>Actinomycetes</taxon>
        <taxon>Micromonosporales</taxon>
        <taxon>Micromonosporaceae</taxon>
        <taxon>Salinispora</taxon>
    </lineage>
</organism>
<protein>
    <recommendedName>
        <fullName evidence="1">Mycothiol acetyltransferase</fullName>
        <shortName evidence="1">MSH acetyltransferase</shortName>
        <ecNumber evidence="1">2.3.1.189</ecNumber>
    </recommendedName>
    <alternativeName>
        <fullName evidence="1">Mycothiol synthase</fullName>
    </alternativeName>
</protein>
<evidence type="ECO:0000255" key="1">
    <source>
        <dbReference type="HAMAP-Rule" id="MF_01698"/>
    </source>
</evidence>
<proteinExistence type="inferred from homology"/>
<sequence length="307" mass="33261">MNSTEPDSDRVTRTDRLNAPEIADVQALARAAGDADGADPFDEHTLLRLRDPHAPTHHLTARTANGTLTGYAHLDITNPTSGTGVELAVHPAYRRRGTGRALARSVRAAVTGPLRAWAHGDHPSAAALAVDLDYRRARVLWQLRRPLTAPIPEPPLPDGVTLRAYRPGADDDAWLALNAKAFADHPEQGQWTAADLQARRDEPWFDAAGFLLAVDPAGQLLGFHWTKIHERPGSARIGEVYVLGVDPTAHGGGLGKALTAAGLAYLRDQRGLDRVMLYVDESNTAAVALYERLGFARWSAHVNYQLG</sequence>
<name>MSHD_SALTO</name>